<protein>
    <recommendedName>
        <fullName>ATP synthase protein 8</fullName>
    </recommendedName>
    <alternativeName>
        <fullName>A6L</fullName>
    </alternativeName>
    <alternativeName>
        <fullName>F-ATPase subunit 8</fullName>
    </alternativeName>
</protein>
<keyword id="KW-0066">ATP synthesis</keyword>
<keyword id="KW-0138">CF(0)</keyword>
<keyword id="KW-0375">Hydrogen ion transport</keyword>
<keyword id="KW-0406">Ion transport</keyword>
<keyword id="KW-0472">Membrane</keyword>
<keyword id="KW-0496">Mitochondrion</keyword>
<keyword id="KW-0812">Transmembrane</keyword>
<keyword id="KW-1133">Transmembrane helix</keyword>
<keyword id="KW-0813">Transport</keyword>
<geneLocation type="mitochondrion"/>
<reference key="1">
    <citation type="journal article" date="1991" name="Curr. Genet.">
        <title>Nucleotide sequence of the COX1 gene in Kluyveromyces lactis mitochondrial DNA: evidence for recent horizontal transfer of a group II intron.</title>
        <authorList>
            <person name="Hardy C.M."/>
            <person name="Clark-Walker G.D."/>
        </authorList>
    </citation>
    <scope>NUCLEOTIDE SEQUENCE [GENOMIC DNA]</scope>
    <source>
        <strain>ATCC 90735 / K8</strain>
    </source>
</reference>
<reference key="2">
    <citation type="journal article" date="2005" name="FEMS Yeast Res.">
        <title>Complete nucleotide sequence of the mitochondrial DNA from Kluyveromyces lactis.</title>
        <authorList>
            <person name="Zivanovic Y."/>
            <person name="Wincker P."/>
            <person name="Vacherie B."/>
            <person name="Bolotin-Fukuhara M."/>
            <person name="Fukuhara H."/>
        </authorList>
    </citation>
    <scope>NUCLEOTIDE SEQUENCE [LARGE SCALE GENOMIC DNA]</scope>
    <source>
        <strain>ATCC 76492 / CBS 2359/152 / CLIB 210</strain>
    </source>
</reference>
<organism>
    <name type="scientific">Kluyveromyces lactis (strain ATCC 8585 / CBS 2359 / DSM 70799 / NBRC 1267 / NRRL Y-1140 / WM37)</name>
    <name type="common">Yeast</name>
    <name type="synonym">Candida sphaerica</name>
    <dbReference type="NCBI Taxonomy" id="284590"/>
    <lineage>
        <taxon>Eukaryota</taxon>
        <taxon>Fungi</taxon>
        <taxon>Dikarya</taxon>
        <taxon>Ascomycota</taxon>
        <taxon>Saccharomycotina</taxon>
        <taxon>Saccharomycetes</taxon>
        <taxon>Saccharomycetales</taxon>
        <taxon>Saccharomycetaceae</taxon>
        <taxon>Kluyveromyces</taxon>
    </lineage>
</organism>
<comment type="function">
    <text evidence="1">Mitochondrial membrane ATP synthase (F(1)F(0) ATP synthase or Complex V) produces ATP from ADP in the presence of a proton gradient across the membrane which is generated by electron transport complexes of the respiratory chain. F-type ATPases consist of two structural domains, F(1) - containing the extramembraneous catalytic core and F(0) - containing the membrane proton channel, linked together by a central stalk and a peripheral stalk. During catalysis, ATP synthesis in the catalytic domain of F(1) is coupled via a rotary mechanism of the central stalk subunits to proton translocation. Part of the complex F(0) domain. Minor subunit located with subunit a in the membrane (By similarity).</text>
</comment>
<comment type="subunit">
    <text evidence="1">F-type ATPases have 2 components, CF(1) - the catalytic core - and CF(0) - the membrane proton channel.</text>
</comment>
<comment type="subcellular location">
    <subcellularLocation>
        <location>Mitochondrion membrane</location>
        <topology>Single-pass membrane protein</topology>
    </subcellularLocation>
</comment>
<comment type="similarity">
    <text evidence="3">Belongs to the ATPase protein 8 family.</text>
</comment>
<name>ATP8_KLULA</name>
<dbReference type="EMBL" id="X57546">
    <property type="protein sequence ID" value="CAA40770.1"/>
    <property type="molecule type" value="Genomic_DNA"/>
</dbReference>
<dbReference type="EMBL" id="AY654900">
    <property type="protein sequence ID" value="AAT64952.1"/>
    <property type="molecule type" value="Genomic_DNA"/>
</dbReference>
<dbReference type="PIR" id="S17994">
    <property type="entry name" value="S17994"/>
</dbReference>
<dbReference type="RefSeq" id="YP_054499.1">
    <property type="nucleotide sequence ID" value="NC_006077.1"/>
</dbReference>
<dbReference type="SMR" id="Q00608"/>
<dbReference type="FunCoup" id="Q00608">
    <property type="interactions" value="106"/>
</dbReference>
<dbReference type="STRING" id="284590.Q00608"/>
<dbReference type="PaxDb" id="284590-Q00608"/>
<dbReference type="GeneID" id="2914080"/>
<dbReference type="KEGG" id="kla:KllafMp04"/>
<dbReference type="InParanoid" id="Q00608"/>
<dbReference type="GO" id="GO:0031966">
    <property type="term" value="C:mitochondrial membrane"/>
    <property type="evidence" value="ECO:0007669"/>
    <property type="project" value="UniProtKB-SubCell"/>
</dbReference>
<dbReference type="GO" id="GO:0045259">
    <property type="term" value="C:proton-transporting ATP synthase complex"/>
    <property type="evidence" value="ECO:0007669"/>
    <property type="project" value="UniProtKB-KW"/>
</dbReference>
<dbReference type="GO" id="GO:0046933">
    <property type="term" value="F:proton-transporting ATP synthase activity, rotational mechanism"/>
    <property type="evidence" value="ECO:0007669"/>
    <property type="project" value="TreeGrafter"/>
</dbReference>
<dbReference type="InterPro" id="IPR009230">
    <property type="entry name" value="ATP_synth_su8_fun"/>
</dbReference>
<dbReference type="PANTHER" id="PTHR36101">
    <property type="entry name" value="ATP SYNTHASE PROTEIN 8"/>
    <property type="match status" value="1"/>
</dbReference>
<dbReference type="PANTHER" id="PTHR36101:SF1">
    <property type="entry name" value="ATP SYNTHASE PROTEIN 8"/>
    <property type="match status" value="1"/>
</dbReference>
<dbReference type="Pfam" id="PF05933">
    <property type="entry name" value="Fun_ATP-synt_8"/>
    <property type="match status" value="1"/>
</dbReference>
<proteinExistence type="inferred from homology"/>
<accession>Q00608</accession>
<evidence type="ECO:0000250" key="1"/>
<evidence type="ECO:0000255" key="2"/>
<evidence type="ECO:0000305" key="3"/>
<sequence>MPQLVPFYFLNQLVYGFALVTILLVLFAQYFLPQILRLYVSRLFISKL</sequence>
<feature type="chain" id="PRO_0000195601" description="ATP synthase protein 8">
    <location>
        <begin position="1"/>
        <end position="48"/>
    </location>
</feature>
<feature type="transmembrane region" description="Helical" evidence="2">
    <location>
        <begin position="13"/>
        <end position="32"/>
    </location>
</feature>
<gene>
    <name type="primary">ATP8</name>
</gene>